<dbReference type="EMBL" id="AF081802">
    <property type="protein sequence ID" value="AAC67541.1"/>
    <property type="molecule type" value="Genomic_DNA"/>
</dbReference>
<dbReference type="EMBL" id="AAFI02000003">
    <property type="protein sequence ID" value="EAL73149.1"/>
    <property type="molecule type" value="Genomic_DNA"/>
</dbReference>
<dbReference type="RefSeq" id="XP_647634.1">
    <property type="nucleotide sequence ID" value="XM_642542.1"/>
</dbReference>
<dbReference type="SMR" id="O96552"/>
<dbReference type="FunCoup" id="O96552">
    <property type="interactions" value="872"/>
</dbReference>
<dbReference type="STRING" id="44689.O96552"/>
<dbReference type="PaxDb" id="44689-DDB0191317"/>
<dbReference type="EnsemblProtists" id="EAL73149">
    <property type="protein sequence ID" value="EAL73149"/>
    <property type="gene ID" value="DDB_G0267394"/>
</dbReference>
<dbReference type="GeneID" id="8616449"/>
<dbReference type="KEGG" id="ddi:DDB_G0267394"/>
<dbReference type="dictyBase" id="DDB_G0267394">
    <property type="gene designation" value="vps46"/>
</dbReference>
<dbReference type="VEuPathDB" id="AmoebaDB:DDB_G0267394"/>
<dbReference type="eggNOG" id="KOG3232">
    <property type="taxonomic scope" value="Eukaryota"/>
</dbReference>
<dbReference type="HOGENOM" id="CLU_080826_1_0_1"/>
<dbReference type="InParanoid" id="O96552"/>
<dbReference type="OMA" id="DMIFQLR"/>
<dbReference type="PhylomeDB" id="O96552"/>
<dbReference type="PRO" id="PR:O96552"/>
<dbReference type="Proteomes" id="UP000002195">
    <property type="component" value="Chromosome 1"/>
</dbReference>
<dbReference type="GO" id="GO:0005737">
    <property type="term" value="C:cytoplasm"/>
    <property type="evidence" value="ECO:0000250"/>
    <property type="project" value="dictyBase"/>
</dbReference>
<dbReference type="GO" id="GO:0000815">
    <property type="term" value="C:ESCRT III complex"/>
    <property type="evidence" value="ECO:0000318"/>
    <property type="project" value="GO_Central"/>
</dbReference>
<dbReference type="GO" id="GO:0005770">
    <property type="term" value="C:late endosome"/>
    <property type="evidence" value="ECO:0000250"/>
    <property type="project" value="dictyBase"/>
</dbReference>
<dbReference type="GO" id="GO:0005771">
    <property type="term" value="C:multivesicular body"/>
    <property type="evidence" value="ECO:0000318"/>
    <property type="project" value="GO_Central"/>
</dbReference>
<dbReference type="GO" id="GO:0032509">
    <property type="term" value="P:endosome transport via multivesicular body sorting pathway"/>
    <property type="evidence" value="ECO:0000318"/>
    <property type="project" value="GO_Central"/>
</dbReference>
<dbReference type="GO" id="GO:0045324">
    <property type="term" value="P:late endosome to vacuole transport"/>
    <property type="evidence" value="ECO:0000250"/>
    <property type="project" value="dictyBase"/>
</dbReference>
<dbReference type="GO" id="GO:0006623">
    <property type="term" value="P:protein targeting to vacuole"/>
    <property type="evidence" value="ECO:0000250"/>
    <property type="project" value="dictyBase"/>
</dbReference>
<dbReference type="GO" id="GO:0015031">
    <property type="term" value="P:protein transport"/>
    <property type="evidence" value="ECO:0000318"/>
    <property type="project" value="GO_Central"/>
</dbReference>
<dbReference type="Gene3D" id="6.10.140.1230">
    <property type="match status" value="1"/>
</dbReference>
<dbReference type="InterPro" id="IPR005024">
    <property type="entry name" value="Snf7_fam"/>
</dbReference>
<dbReference type="PANTHER" id="PTHR10476">
    <property type="entry name" value="CHARGED MULTIVESICULAR BODY PROTEIN"/>
    <property type="match status" value="1"/>
</dbReference>
<dbReference type="Pfam" id="PF03357">
    <property type="entry name" value="Snf7"/>
    <property type="match status" value="1"/>
</dbReference>
<name>CHMP1_DICDI</name>
<evidence type="ECO:0000250" key="1"/>
<evidence type="ECO:0000255" key="2"/>
<evidence type="ECO:0000256" key="3">
    <source>
        <dbReference type="SAM" id="MobiDB-lite"/>
    </source>
</evidence>
<evidence type="ECO:0000305" key="4"/>
<accession>O96552</accession>
<accession>Q55F99</accession>
<feature type="chain" id="PRO_0000367439" description="Charged multivesicular body protein 1">
    <location>
        <begin position="1"/>
        <end position="192"/>
    </location>
</feature>
<feature type="region of interest" description="Disordered" evidence="3">
    <location>
        <begin position="164"/>
        <end position="192"/>
    </location>
</feature>
<feature type="coiled-coil region" evidence="2">
    <location>
        <begin position="7"/>
        <end position="35"/>
    </location>
</feature>
<feature type="coiled-coil region" evidence="2">
    <location>
        <begin position="102"/>
        <end position="125"/>
    </location>
</feature>
<gene>
    <name type="primary">chmp1</name>
    <name type="synonym">DG1118</name>
    <name type="synonym">vps46</name>
    <name type="ORF">DDB_G0267394</name>
</gene>
<organism>
    <name type="scientific">Dictyostelium discoideum</name>
    <name type="common">Social amoeba</name>
    <dbReference type="NCBI Taxonomy" id="44689"/>
    <lineage>
        <taxon>Eukaryota</taxon>
        <taxon>Amoebozoa</taxon>
        <taxon>Evosea</taxon>
        <taxon>Eumycetozoa</taxon>
        <taxon>Dictyostelia</taxon>
        <taxon>Dictyosteliales</taxon>
        <taxon>Dictyosteliaceae</taxon>
        <taxon>Dictyostelium</taxon>
    </lineage>
</organism>
<keyword id="KW-0175">Coiled coil</keyword>
<keyword id="KW-0967">Endosome</keyword>
<keyword id="KW-0472">Membrane</keyword>
<keyword id="KW-0653">Protein transport</keyword>
<keyword id="KW-1185">Reference proteome</keyword>
<keyword id="KW-0813">Transport</keyword>
<comment type="function">
    <text evidence="1">Probable peripherally associated component of the endosomal sorting required for transport complex III (ESCRT-III) which is involved in multivesicular bodies (MVBs) formation and sorting of endosomal cargo proteins into MVBs. MVBs contain intraluminal vesicles (ILVs) that are generated by invagination and scission from the limiting membrane of the endosome and are delivered to lysosomes enabling degradation of membrane proteins (By similarity).</text>
</comment>
<comment type="subunit">
    <text evidence="1">Probable peripherally associated component of the endosomal sorting required for transport complex III (ESCRT-III).</text>
</comment>
<comment type="subcellular location">
    <subcellularLocation>
        <location evidence="1">Endosome membrane</location>
        <topology evidence="1">Peripheral membrane protein</topology>
    </subcellularLocation>
</comment>
<comment type="similarity">
    <text evidence="4">Belongs to the SNF7 family.</text>
</comment>
<proteinExistence type="inferred from homology"/>
<protein>
    <recommendedName>
        <fullName>Charged multivesicular body protein 1</fullName>
    </recommendedName>
    <alternativeName>
        <fullName>Developmental gene 1118 protein</fullName>
    </alternativeName>
    <alternativeName>
        <fullName>Vacuolar protein-sorting-associated protein 46</fullName>
    </alternativeName>
</protein>
<reference key="1">
    <citation type="submission" date="1998-08" db="EMBL/GenBank/DDBJ databases">
        <title>Dictyostelium discoideum developmental gene DG1118.</title>
        <authorList>
            <person name="Iranfar N."/>
            <person name="Loomis W.F."/>
        </authorList>
    </citation>
    <scope>NUCLEOTIDE SEQUENCE [GENOMIC DNA]</scope>
    <source>
        <strain>AX4</strain>
    </source>
</reference>
<reference key="2">
    <citation type="journal article" date="2005" name="Nature">
        <title>The genome of the social amoeba Dictyostelium discoideum.</title>
        <authorList>
            <person name="Eichinger L."/>
            <person name="Pachebat J.A."/>
            <person name="Gloeckner G."/>
            <person name="Rajandream M.A."/>
            <person name="Sucgang R."/>
            <person name="Berriman M."/>
            <person name="Song J."/>
            <person name="Olsen R."/>
            <person name="Szafranski K."/>
            <person name="Xu Q."/>
            <person name="Tunggal B."/>
            <person name="Kummerfeld S."/>
            <person name="Madera M."/>
            <person name="Konfortov B.A."/>
            <person name="Rivero F."/>
            <person name="Bankier A.T."/>
            <person name="Lehmann R."/>
            <person name="Hamlin N."/>
            <person name="Davies R."/>
            <person name="Gaudet P."/>
            <person name="Fey P."/>
            <person name="Pilcher K."/>
            <person name="Chen G."/>
            <person name="Saunders D."/>
            <person name="Sodergren E.J."/>
            <person name="Davis P."/>
            <person name="Kerhornou A."/>
            <person name="Nie X."/>
            <person name="Hall N."/>
            <person name="Anjard C."/>
            <person name="Hemphill L."/>
            <person name="Bason N."/>
            <person name="Farbrother P."/>
            <person name="Desany B."/>
            <person name="Just E."/>
            <person name="Morio T."/>
            <person name="Rost R."/>
            <person name="Churcher C.M."/>
            <person name="Cooper J."/>
            <person name="Haydock S."/>
            <person name="van Driessche N."/>
            <person name="Cronin A."/>
            <person name="Goodhead I."/>
            <person name="Muzny D.M."/>
            <person name="Mourier T."/>
            <person name="Pain A."/>
            <person name="Lu M."/>
            <person name="Harper D."/>
            <person name="Lindsay R."/>
            <person name="Hauser H."/>
            <person name="James K.D."/>
            <person name="Quiles M."/>
            <person name="Madan Babu M."/>
            <person name="Saito T."/>
            <person name="Buchrieser C."/>
            <person name="Wardroper A."/>
            <person name="Felder M."/>
            <person name="Thangavelu M."/>
            <person name="Johnson D."/>
            <person name="Knights A."/>
            <person name="Loulseged H."/>
            <person name="Mungall K.L."/>
            <person name="Oliver K."/>
            <person name="Price C."/>
            <person name="Quail M.A."/>
            <person name="Urushihara H."/>
            <person name="Hernandez J."/>
            <person name="Rabbinowitsch E."/>
            <person name="Steffen D."/>
            <person name="Sanders M."/>
            <person name="Ma J."/>
            <person name="Kohara Y."/>
            <person name="Sharp S."/>
            <person name="Simmonds M.N."/>
            <person name="Spiegler S."/>
            <person name="Tivey A."/>
            <person name="Sugano S."/>
            <person name="White B."/>
            <person name="Walker D."/>
            <person name="Woodward J.R."/>
            <person name="Winckler T."/>
            <person name="Tanaka Y."/>
            <person name="Shaulsky G."/>
            <person name="Schleicher M."/>
            <person name="Weinstock G.M."/>
            <person name="Rosenthal A."/>
            <person name="Cox E.C."/>
            <person name="Chisholm R.L."/>
            <person name="Gibbs R.A."/>
            <person name="Loomis W.F."/>
            <person name="Platzer M."/>
            <person name="Kay R.R."/>
            <person name="Williams J.G."/>
            <person name="Dear P.H."/>
            <person name="Noegel A.A."/>
            <person name="Barrell B.G."/>
            <person name="Kuspa A."/>
        </authorList>
    </citation>
    <scope>NUCLEOTIDE SEQUENCE [LARGE SCALE GENOMIC DNA]</scope>
    <source>
        <strain>AX4</strain>
    </source>
</reference>
<sequence length="192" mass="21835">MENQLFQLKFTSKQLEKQSKKSEQSEKAQKIKLKKAIEQGNMDGARIYAQNAIREKNQSLNYLRLASRIDAVASRVETAIRMKSVTGSMANIVKSMEKSMRNMDLEKITQVMDQFERQFEDLDVQSVYVENAMNQTTTLSTPADQVDLLISQVADEHGLNVGMQMGSAPSEKVQQGETDELTERLNRLKQKN</sequence>